<gene>
    <name type="primary">EXPA17</name>
    <name type="synonym">EXP17</name>
    <name type="ordered locus">At4g01630</name>
    <name type="ORF">T15B16.16</name>
</gene>
<proteinExistence type="evidence at transcript level"/>
<reference key="1">
    <citation type="journal article" date="1999" name="Nature">
        <title>Sequence and analysis of chromosome 4 of the plant Arabidopsis thaliana.</title>
        <authorList>
            <person name="Mayer K.F.X."/>
            <person name="Schueller C."/>
            <person name="Wambutt R."/>
            <person name="Murphy G."/>
            <person name="Volckaert G."/>
            <person name="Pohl T."/>
            <person name="Duesterhoeft A."/>
            <person name="Stiekema W."/>
            <person name="Entian K.-D."/>
            <person name="Terryn N."/>
            <person name="Harris B."/>
            <person name="Ansorge W."/>
            <person name="Brandt P."/>
            <person name="Grivell L.A."/>
            <person name="Rieger M."/>
            <person name="Weichselgartner M."/>
            <person name="de Simone V."/>
            <person name="Obermaier B."/>
            <person name="Mache R."/>
            <person name="Mueller M."/>
            <person name="Kreis M."/>
            <person name="Delseny M."/>
            <person name="Puigdomenech P."/>
            <person name="Watson M."/>
            <person name="Schmidtheini T."/>
            <person name="Reichert B."/>
            <person name="Portetelle D."/>
            <person name="Perez-Alonso M."/>
            <person name="Boutry M."/>
            <person name="Bancroft I."/>
            <person name="Vos P."/>
            <person name="Hoheisel J."/>
            <person name="Zimmermann W."/>
            <person name="Wedler H."/>
            <person name="Ridley P."/>
            <person name="Langham S.-A."/>
            <person name="McCullagh B."/>
            <person name="Bilham L."/>
            <person name="Robben J."/>
            <person name="van der Schueren J."/>
            <person name="Grymonprez B."/>
            <person name="Chuang Y.-J."/>
            <person name="Vandenbussche F."/>
            <person name="Braeken M."/>
            <person name="Weltjens I."/>
            <person name="Voet M."/>
            <person name="Bastiaens I."/>
            <person name="Aert R."/>
            <person name="Defoor E."/>
            <person name="Weitzenegger T."/>
            <person name="Bothe G."/>
            <person name="Ramsperger U."/>
            <person name="Hilbert H."/>
            <person name="Braun M."/>
            <person name="Holzer E."/>
            <person name="Brandt A."/>
            <person name="Peters S."/>
            <person name="van Staveren M."/>
            <person name="Dirkse W."/>
            <person name="Mooijman P."/>
            <person name="Klein Lankhorst R."/>
            <person name="Rose M."/>
            <person name="Hauf J."/>
            <person name="Koetter P."/>
            <person name="Berneiser S."/>
            <person name="Hempel S."/>
            <person name="Feldpausch M."/>
            <person name="Lamberth S."/>
            <person name="Van den Daele H."/>
            <person name="De Keyser A."/>
            <person name="Buysshaert C."/>
            <person name="Gielen J."/>
            <person name="Villarroel R."/>
            <person name="De Clercq R."/>
            <person name="van Montagu M."/>
            <person name="Rogers J."/>
            <person name="Cronin A."/>
            <person name="Quail M.A."/>
            <person name="Bray-Allen S."/>
            <person name="Clark L."/>
            <person name="Doggett J."/>
            <person name="Hall S."/>
            <person name="Kay M."/>
            <person name="Lennard N."/>
            <person name="McLay K."/>
            <person name="Mayes R."/>
            <person name="Pettett A."/>
            <person name="Rajandream M.A."/>
            <person name="Lyne M."/>
            <person name="Benes V."/>
            <person name="Rechmann S."/>
            <person name="Borkova D."/>
            <person name="Bloecker H."/>
            <person name="Scharfe M."/>
            <person name="Grimm M."/>
            <person name="Loehnert T.-H."/>
            <person name="Dose S."/>
            <person name="de Haan M."/>
            <person name="Maarse A.C."/>
            <person name="Schaefer M."/>
            <person name="Mueller-Auer S."/>
            <person name="Gabel C."/>
            <person name="Fuchs M."/>
            <person name="Fartmann B."/>
            <person name="Granderath K."/>
            <person name="Dauner D."/>
            <person name="Herzl A."/>
            <person name="Neumann S."/>
            <person name="Argiriou A."/>
            <person name="Vitale D."/>
            <person name="Liguori R."/>
            <person name="Piravandi E."/>
            <person name="Massenet O."/>
            <person name="Quigley F."/>
            <person name="Clabauld G."/>
            <person name="Muendlein A."/>
            <person name="Felber R."/>
            <person name="Schnabl S."/>
            <person name="Hiller R."/>
            <person name="Schmidt W."/>
            <person name="Lecharny A."/>
            <person name="Aubourg S."/>
            <person name="Chefdor F."/>
            <person name="Cooke R."/>
            <person name="Berger C."/>
            <person name="Monfort A."/>
            <person name="Casacuberta E."/>
            <person name="Gibbons T."/>
            <person name="Weber N."/>
            <person name="Vandenbol M."/>
            <person name="Bargues M."/>
            <person name="Terol J."/>
            <person name="Torres A."/>
            <person name="Perez-Perez A."/>
            <person name="Purnelle B."/>
            <person name="Bent E."/>
            <person name="Johnson S."/>
            <person name="Tacon D."/>
            <person name="Jesse T."/>
            <person name="Heijnen L."/>
            <person name="Schwarz S."/>
            <person name="Scholler P."/>
            <person name="Heber S."/>
            <person name="Francs P."/>
            <person name="Bielke C."/>
            <person name="Frishman D."/>
            <person name="Haase D."/>
            <person name="Lemcke K."/>
            <person name="Mewes H.-W."/>
            <person name="Stocker S."/>
            <person name="Zaccaria P."/>
            <person name="Bevan M."/>
            <person name="Wilson R.K."/>
            <person name="de la Bastide M."/>
            <person name="Habermann K."/>
            <person name="Parnell L."/>
            <person name="Dedhia N."/>
            <person name="Gnoj L."/>
            <person name="Schutz K."/>
            <person name="Huang E."/>
            <person name="Spiegel L."/>
            <person name="Sekhon M."/>
            <person name="Murray J."/>
            <person name="Sheet P."/>
            <person name="Cordes M."/>
            <person name="Abu-Threideh J."/>
            <person name="Stoneking T."/>
            <person name="Kalicki J."/>
            <person name="Graves T."/>
            <person name="Harmon G."/>
            <person name="Edwards J."/>
            <person name="Latreille P."/>
            <person name="Courtney L."/>
            <person name="Cloud J."/>
            <person name="Abbott A."/>
            <person name="Scott K."/>
            <person name="Johnson D."/>
            <person name="Minx P."/>
            <person name="Bentley D."/>
            <person name="Fulton B."/>
            <person name="Miller N."/>
            <person name="Greco T."/>
            <person name="Kemp K."/>
            <person name="Kramer J."/>
            <person name="Fulton L."/>
            <person name="Mardis E."/>
            <person name="Dante M."/>
            <person name="Pepin K."/>
            <person name="Hillier L.W."/>
            <person name="Nelson J."/>
            <person name="Spieth J."/>
            <person name="Ryan E."/>
            <person name="Andrews S."/>
            <person name="Geisel C."/>
            <person name="Layman D."/>
            <person name="Du H."/>
            <person name="Ali J."/>
            <person name="Berghoff A."/>
            <person name="Jones K."/>
            <person name="Drone K."/>
            <person name="Cotton M."/>
            <person name="Joshu C."/>
            <person name="Antonoiu B."/>
            <person name="Zidanic M."/>
            <person name="Strong C."/>
            <person name="Sun H."/>
            <person name="Lamar B."/>
            <person name="Yordan C."/>
            <person name="Ma P."/>
            <person name="Zhong J."/>
            <person name="Preston R."/>
            <person name="Vil D."/>
            <person name="Shekher M."/>
            <person name="Matero A."/>
            <person name="Shah R."/>
            <person name="Swaby I.K."/>
            <person name="O'Shaughnessy A."/>
            <person name="Rodriguez M."/>
            <person name="Hoffman J."/>
            <person name="Till S."/>
            <person name="Granat S."/>
            <person name="Shohdy N."/>
            <person name="Hasegawa A."/>
            <person name="Hameed A."/>
            <person name="Lodhi M."/>
            <person name="Johnson A."/>
            <person name="Chen E."/>
            <person name="Marra M.A."/>
            <person name="Martienssen R."/>
            <person name="McCombie W.R."/>
        </authorList>
    </citation>
    <scope>NUCLEOTIDE SEQUENCE [LARGE SCALE GENOMIC DNA]</scope>
    <source>
        <strain>cv. Columbia</strain>
    </source>
</reference>
<reference key="2">
    <citation type="journal article" date="2017" name="Plant J.">
        <title>Araport11: a complete reannotation of the Arabidopsis thaliana reference genome.</title>
        <authorList>
            <person name="Cheng C.Y."/>
            <person name="Krishnakumar V."/>
            <person name="Chan A.P."/>
            <person name="Thibaud-Nissen F."/>
            <person name="Schobel S."/>
            <person name="Town C.D."/>
        </authorList>
    </citation>
    <scope>GENOME REANNOTATION</scope>
    <source>
        <strain>cv. Columbia</strain>
    </source>
</reference>
<reference key="3">
    <citation type="journal article" date="2004" name="Plant Mol. Biol.">
        <title>Nomenclature for members of the expansin superfamily of genes and proteins.</title>
        <authorList>
            <person name="Kende H."/>
            <person name="Bradford K.J."/>
            <person name="Brummell D.A."/>
            <person name="Cho H.-T."/>
            <person name="Cosgrove D.J."/>
            <person name="Fleming A.J."/>
            <person name="Gehring C."/>
            <person name="Lee Y."/>
            <person name="McQueen-Mason S.J."/>
            <person name="Rose J.K.C."/>
            <person name="Voesenek L.A.C."/>
        </authorList>
    </citation>
    <scope>NOMENCLATURE</scope>
</reference>
<reference key="4">
    <citation type="journal article" date="2013" name="Plant Cell Physiol.">
        <title>EXPANSINA17 up-regulated by LBD18/ASL20 promotes lateral root formation during the auxin response.</title>
        <authorList>
            <person name="Lee H.W."/>
            <person name="Kim J."/>
        </authorList>
    </citation>
    <scope>FUNCTION</scope>
    <scope>DEVELOPMENTAL STAGE</scope>
    <scope>INDUCTION BY AUXIN</scope>
</reference>
<organism>
    <name type="scientific">Arabidopsis thaliana</name>
    <name type="common">Mouse-ear cress</name>
    <dbReference type="NCBI Taxonomy" id="3702"/>
    <lineage>
        <taxon>Eukaryota</taxon>
        <taxon>Viridiplantae</taxon>
        <taxon>Streptophyta</taxon>
        <taxon>Embryophyta</taxon>
        <taxon>Tracheophyta</taxon>
        <taxon>Spermatophyta</taxon>
        <taxon>Magnoliopsida</taxon>
        <taxon>eudicotyledons</taxon>
        <taxon>Gunneridae</taxon>
        <taxon>Pentapetalae</taxon>
        <taxon>rosids</taxon>
        <taxon>malvids</taxon>
        <taxon>Brassicales</taxon>
        <taxon>Brassicaceae</taxon>
        <taxon>Camelineae</taxon>
        <taxon>Arabidopsis</taxon>
    </lineage>
</organism>
<evidence type="ECO:0000250" key="1">
    <source>
        <dbReference type="UniProtKB" id="Q9LDR9"/>
    </source>
</evidence>
<evidence type="ECO:0000255" key="2"/>
<evidence type="ECO:0000255" key="3">
    <source>
        <dbReference type="PROSITE-ProRule" id="PRU00078"/>
    </source>
</evidence>
<evidence type="ECO:0000255" key="4">
    <source>
        <dbReference type="PROSITE-ProRule" id="PRU00079"/>
    </source>
</evidence>
<evidence type="ECO:0000269" key="5">
    <source>
    </source>
</evidence>
<evidence type="ECO:0000305" key="6"/>
<accession>Q9ZSI1</accession>
<keyword id="KW-0134">Cell wall</keyword>
<keyword id="KW-0961">Cell wall biogenesis/degradation</keyword>
<keyword id="KW-0472">Membrane</keyword>
<keyword id="KW-1185">Reference proteome</keyword>
<keyword id="KW-0964">Secreted</keyword>
<keyword id="KW-0732">Signal</keyword>
<sequence length="255" mass="27715">MTKIFSLLVAMIFSTMFFMKISSVSAGWLQAHATFYGGSDASGTMGGACGYGNLYTDGYKTNTAALSTALFNDGKSCGGCYQILCDATKVPQWCLKGKSITITATNFCPPNFAQASDNGGWCNPPRPHFDMAQPAFLTIAKYKAGIVPILYKKVGCRRSGGMRFTINGRNYFELVLISNVAGGGEISKVWIKGSKSNKWETMSRNWGANYQSNTYLNGQSLSFKVQLSDGSIKAALNVVPSNWRFGQSFKSNVNF</sequence>
<feature type="signal peptide" evidence="2">
    <location>
        <begin position="1"/>
        <end position="26"/>
    </location>
</feature>
<feature type="chain" id="PRO_0000008698" description="Putative expansin-A17">
    <location>
        <begin position="27"/>
        <end position="255"/>
    </location>
</feature>
<feature type="domain" description="Expansin-like EG45" evidence="4">
    <location>
        <begin position="46"/>
        <end position="161"/>
    </location>
</feature>
<feature type="domain" description="Expansin-like CBD" evidence="3">
    <location>
        <begin position="171"/>
        <end position="251"/>
    </location>
</feature>
<protein>
    <recommendedName>
        <fullName>Putative expansin-A17</fullName>
        <shortName>AtEXPA17</shortName>
    </recommendedName>
    <alternativeName>
        <fullName>Alpha-expansin-17</fullName>
        <shortName>At-EXP17</shortName>
        <shortName>AtEx17</shortName>
    </alternativeName>
    <alternativeName>
        <fullName>Ath-ExpAlpha-1.13</fullName>
    </alternativeName>
</protein>
<comment type="function">
    <text evidence="1 5">Causes loosening and extension of plant cell walls by disrupting non-covalent bonding between cellulose microfibrils and matrix glucans. No enzymatic activity has been found (By similarity). Target of the transcriptional activator LBD18. Regulated by LBD18 to promote lateral root formation (PubMed:23872272).</text>
</comment>
<comment type="subcellular location">
    <subcellularLocation>
        <location>Secreted</location>
        <location>Cell wall</location>
    </subcellularLocation>
    <subcellularLocation>
        <location>Membrane</location>
        <topology>Peripheral membrane protein</topology>
    </subcellularLocation>
</comment>
<comment type="developmental stage">
    <text evidence="5">Expressed during lateral root development.</text>
</comment>
<comment type="induction">
    <text evidence="5">By auxin.</text>
</comment>
<comment type="miscellaneous">
    <text evidence="5">Plants silencing EXPA17 exhibit reduced number of emerged lateral roots. Plants over-expressing EXPA17 show increased density of emerged lateral roots.</text>
</comment>
<comment type="similarity">
    <text evidence="6">Belongs to the expansin family. Expansin A subfamily.</text>
</comment>
<comment type="online information" name="EXPANSIN homepage">
    <link uri="https://www.dept.psu.edu/biology/groups/expansins/index.htm"/>
</comment>
<dbReference type="EMBL" id="AF104919">
    <property type="protein sequence ID" value="AAC72858.1"/>
    <property type="molecule type" value="Genomic_DNA"/>
</dbReference>
<dbReference type="EMBL" id="AL161492">
    <property type="protein sequence ID" value="CAB77733.1"/>
    <property type="molecule type" value="Genomic_DNA"/>
</dbReference>
<dbReference type="EMBL" id="CP002687">
    <property type="protein sequence ID" value="AEE82054.1"/>
    <property type="molecule type" value="Genomic_DNA"/>
</dbReference>
<dbReference type="PIR" id="T02010">
    <property type="entry name" value="T02010"/>
</dbReference>
<dbReference type="RefSeq" id="NP_192072.1">
    <property type="nucleotide sequence ID" value="NM_116393.2"/>
</dbReference>
<dbReference type="SMR" id="Q9ZSI1"/>
<dbReference type="FunCoup" id="Q9ZSI1">
    <property type="interactions" value="81"/>
</dbReference>
<dbReference type="STRING" id="3702.Q9ZSI1"/>
<dbReference type="PaxDb" id="3702-AT4G01630.1"/>
<dbReference type="ProteomicsDB" id="222416"/>
<dbReference type="EnsemblPlants" id="AT4G01630.1">
    <property type="protein sequence ID" value="AT4G01630.1"/>
    <property type="gene ID" value="AT4G01630"/>
</dbReference>
<dbReference type="GeneID" id="827983"/>
<dbReference type="Gramene" id="AT4G01630.1">
    <property type="protein sequence ID" value="AT4G01630.1"/>
    <property type="gene ID" value="AT4G01630"/>
</dbReference>
<dbReference type="KEGG" id="ath:AT4G01630"/>
<dbReference type="Araport" id="AT4G01630"/>
<dbReference type="TAIR" id="AT4G01630">
    <property type="gene designation" value="EXPA17"/>
</dbReference>
<dbReference type="eggNOG" id="ENOG502QS90">
    <property type="taxonomic scope" value="Eukaryota"/>
</dbReference>
<dbReference type="HOGENOM" id="CLU_027462_0_1_1"/>
<dbReference type="InParanoid" id="Q9ZSI1"/>
<dbReference type="OMA" id="AMIFSTM"/>
<dbReference type="OrthoDB" id="5823761at2759"/>
<dbReference type="PhylomeDB" id="Q9ZSI1"/>
<dbReference type="PRO" id="PR:Q9ZSI1"/>
<dbReference type="Proteomes" id="UP000006548">
    <property type="component" value="Chromosome 4"/>
</dbReference>
<dbReference type="ExpressionAtlas" id="Q9ZSI1">
    <property type="expression patterns" value="baseline and differential"/>
</dbReference>
<dbReference type="GO" id="GO:0005576">
    <property type="term" value="C:extracellular region"/>
    <property type="evidence" value="ECO:0007669"/>
    <property type="project" value="UniProtKB-KW"/>
</dbReference>
<dbReference type="GO" id="GO:0016020">
    <property type="term" value="C:membrane"/>
    <property type="evidence" value="ECO:0007669"/>
    <property type="project" value="UniProtKB-SubCell"/>
</dbReference>
<dbReference type="GO" id="GO:0010311">
    <property type="term" value="P:lateral root formation"/>
    <property type="evidence" value="ECO:0000315"/>
    <property type="project" value="UniProtKB"/>
</dbReference>
<dbReference type="GO" id="GO:0009828">
    <property type="term" value="P:plant-type cell wall loosening"/>
    <property type="evidence" value="ECO:0000250"/>
    <property type="project" value="UniProtKB"/>
</dbReference>
<dbReference type="CDD" id="cd22274">
    <property type="entry name" value="DPBB_EXPA_N"/>
    <property type="match status" value="1"/>
</dbReference>
<dbReference type="FunFam" id="2.40.40.10:FF:000001">
    <property type="entry name" value="Expansin"/>
    <property type="match status" value="1"/>
</dbReference>
<dbReference type="FunFam" id="2.60.40.760:FF:000001">
    <property type="entry name" value="Expansin"/>
    <property type="match status" value="1"/>
</dbReference>
<dbReference type="Gene3D" id="2.60.40.760">
    <property type="entry name" value="Expansin, cellulose-binding-like domain"/>
    <property type="match status" value="1"/>
</dbReference>
<dbReference type="Gene3D" id="2.40.40.10">
    <property type="entry name" value="RlpA-like domain"/>
    <property type="match status" value="1"/>
</dbReference>
<dbReference type="InterPro" id="IPR007118">
    <property type="entry name" value="Expan_Lol_pI"/>
</dbReference>
<dbReference type="InterPro" id="IPR002963">
    <property type="entry name" value="Expansin"/>
</dbReference>
<dbReference type="InterPro" id="IPR007112">
    <property type="entry name" value="Expansin/allergen_DPBB_dom"/>
</dbReference>
<dbReference type="InterPro" id="IPR007117">
    <property type="entry name" value="Expansin_CBD"/>
</dbReference>
<dbReference type="InterPro" id="IPR036749">
    <property type="entry name" value="Expansin_CBD_sf"/>
</dbReference>
<dbReference type="InterPro" id="IPR009009">
    <property type="entry name" value="RlpA-like_DPBB"/>
</dbReference>
<dbReference type="InterPro" id="IPR036908">
    <property type="entry name" value="RlpA-like_sf"/>
</dbReference>
<dbReference type="PANTHER" id="PTHR31867">
    <property type="entry name" value="EXPANSIN-A15"/>
    <property type="match status" value="1"/>
</dbReference>
<dbReference type="Pfam" id="PF03330">
    <property type="entry name" value="DPBB_1"/>
    <property type="match status" value="1"/>
</dbReference>
<dbReference type="Pfam" id="PF01357">
    <property type="entry name" value="Expansin_C"/>
    <property type="match status" value="1"/>
</dbReference>
<dbReference type="PRINTS" id="PR01226">
    <property type="entry name" value="EXPANSIN"/>
</dbReference>
<dbReference type="PRINTS" id="PR01225">
    <property type="entry name" value="EXPANSNFAMLY"/>
</dbReference>
<dbReference type="SMART" id="SM00837">
    <property type="entry name" value="DPBB_1"/>
    <property type="match status" value="1"/>
</dbReference>
<dbReference type="SUPFAM" id="SSF50685">
    <property type="entry name" value="Barwin-like endoglucanases"/>
    <property type="match status" value="1"/>
</dbReference>
<dbReference type="SUPFAM" id="SSF49590">
    <property type="entry name" value="PHL pollen allergen"/>
    <property type="match status" value="1"/>
</dbReference>
<dbReference type="PROSITE" id="PS50843">
    <property type="entry name" value="EXPANSIN_CBD"/>
    <property type="match status" value="1"/>
</dbReference>
<dbReference type="PROSITE" id="PS50842">
    <property type="entry name" value="EXPANSIN_EG45"/>
    <property type="match status" value="1"/>
</dbReference>
<name>EXP17_ARATH</name>